<organismHost>
    <name type="scientific">Homo sapiens</name>
    <name type="common">Human</name>
    <dbReference type="NCBI Taxonomy" id="9606"/>
</organismHost>
<organism>
    <name type="scientific">Human herpesvirus 6A (strain GS)</name>
    <name type="common">HHV-6 variant A</name>
    <name type="synonym">Human B lymphotropic virus</name>
    <dbReference type="NCBI Taxonomy" id="10369"/>
    <lineage>
        <taxon>Viruses</taxon>
        <taxon>Duplodnaviria</taxon>
        <taxon>Heunggongvirae</taxon>
        <taxon>Peploviricota</taxon>
        <taxon>Herviviricetes</taxon>
        <taxon>Herpesvirales</taxon>
        <taxon>Orthoherpesviridae</taxon>
        <taxon>Betaherpesvirinae</taxon>
        <taxon>Roseolovirus</taxon>
        <taxon>Roseolovirus humanbeta6a</taxon>
        <taxon>Human betaherpesvirus 6A</taxon>
    </lineage>
</organism>
<name>U17_HHV6G</name>
<dbReference type="EMBL" id="AF294810">
    <property type="protein sequence ID" value="AAG30202.1"/>
    <property type="molecule type" value="Genomic_DNA"/>
</dbReference>
<feature type="chain" id="PRO_0000343649" description="Protein U17">
    <location>
        <begin position="1"/>
        <end position="86"/>
    </location>
</feature>
<gene>
    <name type="primary">U17/U16</name>
</gene>
<sequence>MADERTGDSVKTRYDIALMNLNDIKIAVFRDSLSTYVEQKTGLTIQFNWPKSRCLVISTLCKIPFPTKSAAELQEMCKYQCFVSVL</sequence>
<keyword id="KW-0025">Alternative splicing</keyword>
<proteinExistence type="predicted"/>
<comment type="alternative products">
    <event type="alternative splicing"/>
    <isoform>
        <id>Q9DYE0-1</id>
        <name>2</name>
        <name>Protein U17</name>
        <sequence type="displayed"/>
    </isoform>
    <isoform>
        <id>P30024-1</id>
        <name>1</name>
        <name>Protein U17/U16</name>
        <sequence type="external"/>
    </isoform>
    <isoform>
        <id>P30024-2</id>
        <name>3</name>
        <name>Protein U16</name>
        <name>B701</name>
        <sequence type="external"/>
    </isoform>
</comment>
<accession>Q9DYE0</accession>
<protein>
    <recommendedName>
        <fullName>Protein U17</fullName>
    </recommendedName>
</protein>
<reference key="1">
    <citation type="journal article" date="2000" name="J. Virol.">
        <title>Characterization of transcripts expressed from human herpesvirus 6A strain GS immediate-early region B U16-U17 open reading frames.</title>
        <authorList>
            <person name="Flebbe-Rehwaldt L.M."/>
            <person name="Wood C."/>
            <person name="Chandran B."/>
        </authorList>
    </citation>
    <scope>NUCLEOTIDE SEQUENCE [GENOMIC DNA]</scope>
    <scope>ALTERNATIVE SPLICING (ISOFORMS 1 AND 3)</scope>
</reference>